<keyword id="KW-0010">Activator</keyword>
<keyword id="KW-0963">Cytoplasm</keyword>
<keyword id="KW-0238">DNA-binding</keyword>
<keyword id="KW-0597">Phosphoprotein</keyword>
<keyword id="KW-0678">Repressor</keyword>
<keyword id="KW-0804">Transcription</keyword>
<keyword id="KW-0805">Transcription regulation</keyword>
<keyword id="KW-0902">Two-component regulatory system</keyword>
<keyword id="KW-0843">Virulence</keyword>
<comment type="function">
    <text evidence="1">Member of the two-component regulatory system ArlS/ArlR involved in the regulation of adhesion, autolysis, multidrug resistance and virulence.</text>
</comment>
<comment type="subcellular location">
    <subcellularLocation>
        <location evidence="1">Cytoplasm</location>
    </subcellularLocation>
</comment>
<comment type="PTM">
    <text evidence="1">Phosphorylated by ArlS.</text>
</comment>
<name>ARLR_STAAC</name>
<organism>
    <name type="scientific">Staphylococcus aureus (strain COL)</name>
    <dbReference type="NCBI Taxonomy" id="93062"/>
    <lineage>
        <taxon>Bacteria</taxon>
        <taxon>Bacillati</taxon>
        <taxon>Bacillota</taxon>
        <taxon>Bacilli</taxon>
        <taxon>Bacillales</taxon>
        <taxon>Staphylococcaceae</taxon>
        <taxon>Staphylococcus</taxon>
    </lineage>
</organism>
<accession>Q5HG04</accession>
<evidence type="ECO:0000250" key="1"/>
<evidence type="ECO:0000255" key="2">
    <source>
        <dbReference type="PROSITE-ProRule" id="PRU00169"/>
    </source>
</evidence>
<evidence type="ECO:0000255" key="3">
    <source>
        <dbReference type="PROSITE-ProRule" id="PRU01091"/>
    </source>
</evidence>
<protein>
    <recommendedName>
        <fullName>Response regulator ArlR</fullName>
    </recommendedName>
</protein>
<dbReference type="EMBL" id="CP000046">
    <property type="protein sequence ID" value="AAW38196.1"/>
    <property type="molecule type" value="Genomic_DNA"/>
</dbReference>
<dbReference type="RefSeq" id="WP_000192137.1">
    <property type="nucleotide sequence ID" value="NZ_JBGOFO010000003.1"/>
</dbReference>
<dbReference type="SMR" id="Q5HG04"/>
<dbReference type="KEGG" id="sac:SACOL1451"/>
<dbReference type="HOGENOM" id="CLU_000445_30_1_9"/>
<dbReference type="Proteomes" id="UP000000530">
    <property type="component" value="Chromosome"/>
</dbReference>
<dbReference type="GO" id="GO:0005829">
    <property type="term" value="C:cytosol"/>
    <property type="evidence" value="ECO:0007669"/>
    <property type="project" value="TreeGrafter"/>
</dbReference>
<dbReference type="GO" id="GO:0032993">
    <property type="term" value="C:protein-DNA complex"/>
    <property type="evidence" value="ECO:0007669"/>
    <property type="project" value="TreeGrafter"/>
</dbReference>
<dbReference type="GO" id="GO:0000156">
    <property type="term" value="F:phosphorelay response regulator activity"/>
    <property type="evidence" value="ECO:0007669"/>
    <property type="project" value="TreeGrafter"/>
</dbReference>
<dbReference type="GO" id="GO:0000976">
    <property type="term" value="F:transcription cis-regulatory region binding"/>
    <property type="evidence" value="ECO:0007669"/>
    <property type="project" value="TreeGrafter"/>
</dbReference>
<dbReference type="GO" id="GO:0006355">
    <property type="term" value="P:regulation of DNA-templated transcription"/>
    <property type="evidence" value="ECO:0007669"/>
    <property type="project" value="InterPro"/>
</dbReference>
<dbReference type="CDD" id="cd00383">
    <property type="entry name" value="trans_reg_C"/>
    <property type="match status" value="1"/>
</dbReference>
<dbReference type="FunFam" id="3.40.50.2300:FF:000001">
    <property type="entry name" value="DNA-binding response regulator PhoB"/>
    <property type="match status" value="1"/>
</dbReference>
<dbReference type="FunFam" id="1.10.10.10:FF:000005">
    <property type="entry name" value="Two-component system response regulator"/>
    <property type="match status" value="1"/>
</dbReference>
<dbReference type="Gene3D" id="3.40.50.2300">
    <property type="match status" value="1"/>
</dbReference>
<dbReference type="Gene3D" id="6.10.250.690">
    <property type="match status" value="1"/>
</dbReference>
<dbReference type="Gene3D" id="1.10.10.10">
    <property type="entry name" value="Winged helix-like DNA-binding domain superfamily/Winged helix DNA-binding domain"/>
    <property type="match status" value="1"/>
</dbReference>
<dbReference type="InterPro" id="IPR011006">
    <property type="entry name" value="CheY-like_superfamily"/>
</dbReference>
<dbReference type="InterPro" id="IPR001867">
    <property type="entry name" value="OmpR/PhoB-type_DNA-bd"/>
</dbReference>
<dbReference type="InterPro" id="IPR016032">
    <property type="entry name" value="Sig_transdc_resp-reg_C-effctor"/>
</dbReference>
<dbReference type="InterPro" id="IPR001789">
    <property type="entry name" value="Sig_transdc_resp-reg_receiver"/>
</dbReference>
<dbReference type="InterPro" id="IPR039420">
    <property type="entry name" value="WalR-like"/>
</dbReference>
<dbReference type="InterPro" id="IPR036388">
    <property type="entry name" value="WH-like_DNA-bd_sf"/>
</dbReference>
<dbReference type="PANTHER" id="PTHR48111">
    <property type="entry name" value="REGULATOR OF RPOS"/>
    <property type="match status" value="1"/>
</dbReference>
<dbReference type="PANTHER" id="PTHR48111:SF22">
    <property type="entry name" value="REGULATOR OF RPOS"/>
    <property type="match status" value="1"/>
</dbReference>
<dbReference type="Pfam" id="PF00072">
    <property type="entry name" value="Response_reg"/>
    <property type="match status" value="1"/>
</dbReference>
<dbReference type="Pfam" id="PF00486">
    <property type="entry name" value="Trans_reg_C"/>
    <property type="match status" value="1"/>
</dbReference>
<dbReference type="SMART" id="SM00448">
    <property type="entry name" value="REC"/>
    <property type="match status" value="1"/>
</dbReference>
<dbReference type="SMART" id="SM00862">
    <property type="entry name" value="Trans_reg_C"/>
    <property type="match status" value="1"/>
</dbReference>
<dbReference type="SUPFAM" id="SSF46894">
    <property type="entry name" value="C-terminal effector domain of the bipartite response regulators"/>
    <property type="match status" value="1"/>
</dbReference>
<dbReference type="SUPFAM" id="SSF52172">
    <property type="entry name" value="CheY-like"/>
    <property type="match status" value="1"/>
</dbReference>
<dbReference type="PROSITE" id="PS51755">
    <property type="entry name" value="OMPR_PHOB"/>
    <property type="match status" value="1"/>
</dbReference>
<dbReference type="PROSITE" id="PS50110">
    <property type="entry name" value="RESPONSE_REGULATORY"/>
    <property type="match status" value="1"/>
</dbReference>
<proteinExistence type="inferred from homology"/>
<feature type="chain" id="PRO_0000081014" description="Response regulator ArlR">
    <location>
        <begin position="1"/>
        <end position="219"/>
    </location>
</feature>
<feature type="domain" description="Response regulatory" evidence="2">
    <location>
        <begin position="3"/>
        <end position="116"/>
    </location>
</feature>
<feature type="DNA-binding region" description="OmpR/PhoB-type" evidence="3">
    <location>
        <begin position="122"/>
        <end position="219"/>
    </location>
</feature>
<feature type="modified residue" description="4-aspartylphosphate" evidence="2">
    <location>
        <position position="52"/>
    </location>
</feature>
<reference key="1">
    <citation type="journal article" date="2005" name="J. Bacteriol.">
        <title>Insights on evolution of virulence and resistance from the complete genome analysis of an early methicillin-resistant Staphylococcus aureus strain and a biofilm-producing methicillin-resistant Staphylococcus epidermidis strain.</title>
        <authorList>
            <person name="Gill S.R."/>
            <person name="Fouts D.E."/>
            <person name="Archer G.L."/>
            <person name="Mongodin E.F."/>
            <person name="DeBoy R.T."/>
            <person name="Ravel J."/>
            <person name="Paulsen I.T."/>
            <person name="Kolonay J.F."/>
            <person name="Brinkac L.M."/>
            <person name="Beanan M.J."/>
            <person name="Dodson R.J."/>
            <person name="Daugherty S.C."/>
            <person name="Madupu R."/>
            <person name="Angiuoli S.V."/>
            <person name="Durkin A.S."/>
            <person name="Haft D.H."/>
            <person name="Vamathevan J.J."/>
            <person name="Khouri H."/>
            <person name="Utterback T.R."/>
            <person name="Lee C."/>
            <person name="Dimitrov G."/>
            <person name="Jiang L."/>
            <person name="Qin H."/>
            <person name="Weidman J."/>
            <person name="Tran K."/>
            <person name="Kang K.H."/>
            <person name="Hance I.R."/>
            <person name="Nelson K.E."/>
            <person name="Fraser C.M."/>
        </authorList>
    </citation>
    <scope>NUCLEOTIDE SEQUENCE [LARGE SCALE GENOMIC DNA]</scope>
    <source>
        <strain>COL</strain>
    </source>
</reference>
<sequence length="219" mass="25498">MTQILIVEDEQNLARFLELELTHENYNVDTEYDGQDGLDKALSHYYDLIILDLMLPSINGLEICRKIRQQQSTPIIIITAKSDTYDKVAGLDYGADDYIVKPFDIEELLARIRAILRRQPQKDIIDVNGITIDKNAFKVTVNGAEIELTKTEYDLLYLLAENKNHVMQREQILNHVWGYNSEVETNVVDVYIRYLRNKLKPYDRDKMIETVRGVGYVIR</sequence>
<gene>
    <name type="primary">arlR</name>
    <name type="ordered locus">SACOL1451</name>
</gene>